<protein>
    <recommendedName>
        <fullName evidence="1">Protein nucleotidyltransferase YdiU</fullName>
        <ecNumber evidence="1">2.7.7.-</ecNumber>
    </recommendedName>
    <alternativeName>
        <fullName evidence="1">Protein adenylyltransferase YdiU</fullName>
        <ecNumber evidence="1">2.7.7.108</ecNumber>
    </alternativeName>
    <alternativeName>
        <fullName evidence="1">Protein uridylyltransferase YdiU</fullName>
        <ecNumber evidence="1">2.7.7.-</ecNumber>
    </alternativeName>
</protein>
<evidence type="ECO:0000255" key="1">
    <source>
        <dbReference type="HAMAP-Rule" id="MF_00692"/>
    </source>
</evidence>
<name>SELO_CORGL</name>
<reference key="1">
    <citation type="journal article" date="2003" name="Appl. Microbiol. Biotechnol.">
        <title>The Corynebacterium glutamicum genome: features and impacts on biotechnological processes.</title>
        <authorList>
            <person name="Ikeda M."/>
            <person name="Nakagawa S."/>
        </authorList>
    </citation>
    <scope>NUCLEOTIDE SEQUENCE [LARGE SCALE GENOMIC DNA]</scope>
    <source>
        <strain>ATCC 13032 / DSM 20300 / JCM 1318 / BCRC 11384 / CCUG 27702 / LMG 3730 / NBRC 12168 / NCIMB 10025 / NRRL B-2784 / 534</strain>
    </source>
</reference>
<reference key="2">
    <citation type="journal article" date="2003" name="J. Biotechnol.">
        <title>The complete Corynebacterium glutamicum ATCC 13032 genome sequence and its impact on the production of L-aspartate-derived amino acids and vitamins.</title>
        <authorList>
            <person name="Kalinowski J."/>
            <person name="Bathe B."/>
            <person name="Bartels D."/>
            <person name="Bischoff N."/>
            <person name="Bott M."/>
            <person name="Burkovski A."/>
            <person name="Dusch N."/>
            <person name="Eggeling L."/>
            <person name="Eikmanns B.J."/>
            <person name="Gaigalat L."/>
            <person name="Goesmann A."/>
            <person name="Hartmann M."/>
            <person name="Huthmacher K."/>
            <person name="Kraemer R."/>
            <person name="Linke B."/>
            <person name="McHardy A.C."/>
            <person name="Meyer F."/>
            <person name="Moeckel B."/>
            <person name="Pfefferle W."/>
            <person name="Puehler A."/>
            <person name="Rey D.A."/>
            <person name="Rueckert C."/>
            <person name="Rupp O."/>
            <person name="Sahm H."/>
            <person name="Wendisch V.F."/>
            <person name="Wiegraebe I."/>
            <person name="Tauch A."/>
        </authorList>
    </citation>
    <scope>NUCLEOTIDE SEQUENCE [LARGE SCALE GENOMIC DNA]</scope>
    <source>
        <strain>ATCC 13032 / DSM 20300 / JCM 1318 / BCRC 11384 / CCUG 27702 / LMG 3730 / NBRC 12168 / NCIMB 10025 / NRRL B-2784 / 534</strain>
    </source>
</reference>
<proteinExistence type="inferred from homology"/>
<keyword id="KW-0067">ATP-binding</keyword>
<keyword id="KW-0460">Magnesium</keyword>
<keyword id="KW-0464">Manganese</keyword>
<keyword id="KW-0479">Metal-binding</keyword>
<keyword id="KW-0547">Nucleotide-binding</keyword>
<keyword id="KW-0548">Nucleotidyltransferase</keyword>
<keyword id="KW-1185">Reference proteome</keyword>
<keyword id="KW-0808">Transferase</keyword>
<sequence>MNTAPFKLEADFASALPTMAAPWQGEEAPNPELVILNDDLAYSLGLDPTWLRTPEGVQFLLGLNPEPLTKAVAQAYSGHQFGQFVASLGDGRALLLGEARSADGVLHDIHLKGSGRTQFSRGADGRAVLGPVLREYIISEAMHALGVPTTRSLAVISTGRKIQRGSVAPGAVLVRVATSLIRVGSFQYSNISGGIELSQHLANYTITRHFPSLVAELSAPTPATYVSLFKAILQRQADTVGKWTRLGFVHGALNTDNTLISGETVDYGPCAFMERYRGDAKFSSIDTYGRYKFENQPMILGWNMARLVETLLPLLGATPDEGMTAAQEALVEFDDLCEQAIRKEFATALGLDESDTGTVEQFRELLYLHNPDITTLLRALTDNTAPPSGFEAFVHDWKTQDPDIEAMRAVNPLFIPRNHLVEAALADAVEGNLEKFHELLAAVTNPFDPTAGPDELRLPSEEGFEEDYMTFCGT</sequence>
<gene>
    <name evidence="1" type="primary">ydiU</name>
    <name evidence="1" type="synonym">selO</name>
    <name type="ordered locus">Cgl1999</name>
    <name type="ordered locus">cg2190</name>
</gene>
<accession>Q8NP26</accession>
<dbReference type="EC" id="2.7.7.-" evidence="1"/>
<dbReference type="EC" id="2.7.7.108" evidence="1"/>
<dbReference type="EMBL" id="BA000036">
    <property type="protein sequence ID" value="BAB99392.1"/>
    <property type="molecule type" value="Genomic_DNA"/>
</dbReference>
<dbReference type="EMBL" id="BX927153">
    <property type="protein sequence ID" value="CAF20340.1"/>
    <property type="molecule type" value="Genomic_DNA"/>
</dbReference>
<dbReference type="RefSeq" id="NP_601205.1">
    <property type="nucleotide sequence ID" value="NC_003450.3"/>
</dbReference>
<dbReference type="RefSeq" id="WP_011014812.1">
    <property type="nucleotide sequence ID" value="NC_006958.1"/>
</dbReference>
<dbReference type="SMR" id="Q8NP26"/>
<dbReference type="STRING" id="196627.cg2190"/>
<dbReference type="DNASU" id="1019956"/>
<dbReference type="KEGG" id="cgb:cg2190"/>
<dbReference type="KEGG" id="cgl:Cgl1999"/>
<dbReference type="PATRIC" id="fig|196627.13.peg.1938"/>
<dbReference type="eggNOG" id="COG0397">
    <property type="taxonomic scope" value="Bacteria"/>
</dbReference>
<dbReference type="HOGENOM" id="CLU_010245_4_1_11"/>
<dbReference type="OrthoDB" id="9776281at2"/>
<dbReference type="BioCyc" id="CORYNE:G18NG-11591-MONOMER"/>
<dbReference type="Proteomes" id="UP000000582">
    <property type="component" value="Chromosome"/>
</dbReference>
<dbReference type="Proteomes" id="UP000001009">
    <property type="component" value="Chromosome"/>
</dbReference>
<dbReference type="GO" id="GO:0070733">
    <property type="term" value="F:AMPylase activity"/>
    <property type="evidence" value="ECO:0007669"/>
    <property type="project" value="RHEA"/>
</dbReference>
<dbReference type="GO" id="GO:0005524">
    <property type="term" value="F:ATP binding"/>
    <property type="evidence" value="ECO:0007669"/>
    <property type="project" value="UniProtKB-UniRule"/>
</dbReference>
<dbReference type="GO" id="GO:0000287">
    <property type="term" value="F:magnesium ion binding"/>
    <property type="evidence" value="ECO:0007669"/>
    <property type="project" value="UniProtKB-UniRule"/>
</dbReference>
<dbReference type="HAMAP" id="MF_00692">
    <property type="entry name" value="YdiU_SelO"/>
    <property type="match status" value="1"/>
</dbReference>
<dbReference type="InterPro" id="IPR003846">
    <property type="entry name" value="SelO"/>
</dbReference>
<dbReference type="PANTHER" id="PTHR32057">
    <property type="entry name" value="PROTEIN ADENYLYLTRANSFERASE SELO, MITOCHONDRIAL"/>
    <property type="match status" value="1"/>
</dbReference>
<dbReference type="PANTHER" id="PTHR32057:SF14">
    <property type="entry name" value="PROTEIN ADENYLYLTRANSFERASE SELO, MITOCHONDRIAL"/>
    <property type="match status" value="1"/>
</dbReference>
<dbReference type="Pfam" id="PF02696">
    <property type="entry name" value="SelO"/>
    <property type="match status" value="1"/>
</dbReference>
<feature type="chain" id="PRO_0000121415" description="Protein nucleotidyltransferase YdiU">
    <location>
        <begin position="1"/>
        <end position="474"/>
    </location>
</feature>
<feature type="active site" description="Proton acceptor" evidence="1">
    <location>
        <position position="256"/>
    </location>
</feature>
<feature type="binding site" evidence="1">
    <location>
        <position position="89"/>
    </location>
    <ligand>
        <name>ATP</name>
        <dbReference type="ChEBI" id="CHEBI:30616"/>
    </ligand>
</feature>
<feature type="binding site" evidence="1">
    <location>
        <position position="91"/>
    </location>
    <ligand>
        <name>ATP</name>
        <dbReference type="ChEBI" id="CHEBI:30616"/>
    </ligand>
</feature>
<feature type="binding site" evidence="1">
    <location>
        <position position="92"/>
    </location>
    <ligand>
        <name>ATP</name>
        <dbReference type="ChEBI" id="CHEBI:30616"/>
    </ligand>
</feature>
<feature type="binding site" evidence="1">
    <location>
        <position position="112"/>
    </location>
    <ligand>
        <name>ATP</name>
        <dbReference type="ChEBI" id="CHEBI:30616"/>
    </ligand>
</feature>
<feature type="binding site" evidence="1">
    <location>
        <position position="124"/>
    </location>
    <ligand>
        <name>ATP</name>
        <dbReference type="ChEBI" id="CHEBI:30616"/>
    </ligand>
</feature>
<feature type="binding site" evidence="1">
    <location>
        <position position="125"/>
    </location>
    <ligand>
        <name>ATP</name>
        <dbReference type="ChEBI" id="CHEBI:30616"/>
    </ligand>
</feature>
<feature type="binding site" evidence="1">
    <location>
        <position position="175"/>
    </location>
    <ligand>
        <name>ATP</name>
        <dbReference type="ChEBI" id="CHEBI:30616"/>
    </ligand>
</feature>
<feature type="binding site" evidence="1">
    <location>
        <position position="182"/>
    </location>
    <ligand>
        <name>ATP</name>
        <dbReference type="ChEBI" id="CHEBI:30616"/>
    </ligand>
</feature>
<feature type="binding site" evidence="1">
    <location>
        <position position="257"/>
    </location>
    <ligand>
        <name>Mg(2+)</name>
        <dbReference type="ChEBI" id="CHEBI:18420"/>
    </ligand>
</feature>
<feature type="binding site" evidence="1">
    <location>
        <position position="266"/>
    </location>
    <ligand>
        <name>ATP</name>
        <dbReference type="ChEBI" id="CHEBI:30616"/>
    </ligand>
</feature>
<feature type="binding site" evidence="1">
    <location>
        <position position="266"/>
    </location>
    <ligand>
        <name>Mg(2+)</name>
        <dbReference type="ChEBI" id="CHEBI:18420"/>
    </ligand>
</feature>
<comment type="function">
    <text evidence="1">Nucleotidyltransferase involved in the post-translational modification of proteins. It can catalyze the addition of adenosine monophosphate (AMP) or uridine monophosphate (UMP) to a protein, resulting in modifications known as AMPylation and UMPylation.</text>
</comment>
<comment type="catalytic activity">
    <reaction evidence="1">
        <text>L-seryl-[protein] + ATP = 3-O-(5'-adenylyl)-L-seryl-[protein] + diphosphate</text>
        <dbReference type="Rhea" id="RHEA:58120"/>
        <dbReference type="Rhea" id="RHEA-COMP:9863"/>
        <dbReference type="Rhea" id="RHEA-COMP:15073"/>
        <dbReference type="ChEBI" id="CHEBI:29999"/>
        <dbReference type="ChEBI" id="CHEBI:30616"/>
        <dbReference type="ChEBI" id="CHEBI:33019"/>
        <dbReference type="ChEBI" id="CHEBI:142516"/>
        <dbReference type="EC" id="2.7.7.108"/>
    </reaction>
</comment>
<comment type="catalytic activity">
    <reaction evidence="1">
        <text>L-threonyl-[protein] + ATP = 3-O-(5'-adenylyl)-L-threonyl-[protein] + diphosphate</text>
        <dbReference type="Rhea" id="RHEA:54292"/>
        <dbReference type="Rhea" id="RHEA-COMP:11060"/>
        <dbReference type="Rhea" id="RHEA-COMP:13847"/>
        <dbReference type="ChEBI" id="CHEBI:30013"/>
        <dbReference type="ChEBI" id="CHEBI:30616"/>
        <dbReference type="ChEBI" id="CHEBI:33019"/>
        <dbReference type="ChEBI" id="CHEBI:138113"/>
        <dbReference type="EC" id="2.7.7.108"/>
    </reaction>
</comment>
<comment type="catalytic activity">
    <reaction evidence="1">
        <text>L-tyrosyl-[protein] + ATP = O-(5'-adenylyl)-L-tyrosyl-[protein] + diphosphate</text>
        <dbReference type="Rhea" id="RHEA:54288"/>
        <dbReference type="Rhea" id="RHEA-COMP:10136"/>
        <dbReference type="Rhea" id="RHEA-COMP:13846"/>
        <dbReference type="ChEBI" id="CHEBI:30616"/>
        <dbReference type="ChEBI" id="CHEBI:33019"/>
        <dbReference type="ChEBI" id="CHEBI:46858"/>
        <dbReference type="ChEBI" id="CHEBI:83624"/>
        <dbReference type="EC" id="2.7.7.108"/>
    </reaction>
</comment>
<comment type="catalytic activity">
    <reaction evidence="1">
        <text>L-histidyl-[protein] + UTP = N(tele)-(5'-uridylyl)-L-histidyl-[protein] + diphosphate</text>
        <dbReference type="Rhea" id="RHEA:83891"/>
        <dbReference type="Rhea" id="RHEA-COMP:9745"/>
        <dbReference type="Rhea" id="RHEA-COMP:20239"/>
        <dbReference type="ChEBI" id="CHEBI:29979"/>
        <dbReference type="ChEBI" id="CHEBI:33019"/>
        <dbReference type="ChEBI" id="CHEBI:46398"/>
        <dbReference type="ChEBI" id="CHEBI:233474"/>
    </reaction>
</comment>
<comment type="catalytic activity">
    <reaction evidence="1">
        <text>L-seryl-[protein] + UTP = O-(5'-uridylyl)-L-seryl-[protein] + diphosphate</text>
        <dbReference type="Rhea" id="RHEA:64604"/>
        <dbReference type="Rhea" id="RHEA-COMP:9863"/>
        <dbReference type="Rhea" id="RHEA-COMP:16635"/>
        <dbReference type="ChEBI" id="CHEBI:29999"/>
        <dbReference type="ChEBI" id="CHEBI:33019"/>
        <dbReference type="ChEBI" id="CHEBI:46398"/>
        <dbReference type="ChEBI" id="CHEBI:156051"/>
    </reaction>
</comment>
<comment type="catalytic activity">
    <reaction evidence="1">
        <text>L-tyrosyl-[protein] + UTP = O-(5'-uridylyl)-L-tyrosyl-[protein] + diphosphate</text>
        <dbReference type="Rhea" id="RHEA:83887"/>
        <dbReference type="Rhea" id="RHEA-COMP:10136"/>
        <dbReference type="Rhea" id="RHEA-COMP:20238"/>
        <dbReference type="ChEBI" id="CHEBI:33019"/>
        <dbReference type="ChEBI" id="CHEBI:46398"/>
        <dbReference type="ChEBI" id="CHEBI:46858"/>
        <dbReference type="ChEBI" id="CHEBI:90602"/>
    </reaction>
</comment>
<comment type="cofactor">
    <cofactor evidence="1">
        <name>Mg(2+)</name>
        <dbReference type="ChEBI" id="CHEBI:18420"/>
    </cofactor>
    <cofactor evidence="1">
        <name>Mn(2+)</name>
        <dbReference type="ChEBI" id="CHEBI:29035"/>
    </cofactor>
</comment>
<comment type="similarity">
    <text evidence="1">Belongs to the SELO family.</text>
</comment>
<organism>
    <name type="scientific">Corynebacterium glutamicum (strain ATCC 13032 / DSM 20300 / JCM 1318 / BCRC 11384 / CCUG 27702 / LMG 3730 / NBRC 12168 / NCIMB 10025 / NRRL B-2784 / 534)</name>
    <dbReference type="NCBI Taxonomy" id="196627"/>
    <lineage>
        <taxon>Bacteria</taxon>
        <taxon>Bacillati</taxon>
        <taxon>Actinomycetota</taxon>
        <taxon>Actinomycetes</taxon>
        <taxon>Mycobacteriales</taxon>
        <taxon>Corynebacteriaceae</taxon>
        <taxon>Corynebacterium</taxon>
    </lineage>
</organism>